<keyword id="KW-0067">ATP-binding</keyword>
<keyword id="KW-0963">Cytoplasm</keyword>
<keyword id="KW-0418">Kinase</keyword>
<keyword id="KW-0479">Metal-binding</keyword>
<keyword id="KW-0545">Nucleotide biosynthesis</keyword>
<keyword id="KW-0547">Nucleotide-binding</keyword>
<keyword id="KW-0808">Transferase</keyword>
<keyword id="KW-0862">Zinc</keyword>
<evidence type="ECO:0000255" key="1">
    <source>
        <dbReference type="HAMAP-Rule" id="MF_00235"/>
    </source>
</evidence>
<protein>
    <recommendedName>
        <fullName evidence="1">Adenylate kinase</fullName>
        <shortName evidence="1">AK</shortName>
        <ecNumber evidence="1">2.7.4.3</ecNumber>
    </recommendedName>
    <alternativeName>
        <fullName evidence="1">ATP-AMP transphosphorylase</fullName>
    </alternativeName>
    <alternativeName>
        <fullName evidence="1">ATP:AMP phosphotransferase</fullName>
    </alternativeName>
    <alternativeName>
        <fullName evidence="1">Adenylate monophosphate kinase</fullName>
    </alternativeName>
</protein>
<dbReference type="EC" id="2.7.4.3" evidence="1"/>
<dbReference type="EMBL" id="CP000027">
    <property type="protein sequence ID" value="AAW40263.1"/>
    <property type="molecule type" value="Genomic_DNA"/>
</dbReference>
<dbReference type="RefSeq" id="WP_010936272.1">
    <property type="nucleotide sequence ID" value="NC_002936.3"/>
</dbReference>
<dbReference type="SMR" id="Q3Z960"/>
<dbReference type="FunCoup" id="Q3Z960">
    <property type="interactions" value="343"/>
</dbReference>
<dbReference type="STRING" id="243164.DET0495"/>
<dbReference type="GeneID" id="3230227"/>
<dbReference type="KEGG" id="det:DET0495"/>
<dbReference type="eggNOG" id="COG0563">
    <property type="taxonomic scope" value="Bacteria"/>
</dbReference>
<dbReference type="HOGENOM" id="CLU_032354_1_2_0"/>
<dbReference type="InParanoid" id="Q3Z960"/>
<dbReference type="UniPathway" id="UPA00588">
    <property type="reaction ID" value="UER00649"/>
</dbReference>
<dbReference type="Proteomes" id="UP000008289">
    <property type="component" value="Chromosome"/>
</dbReference>
<dbReference type="GO" id="GO:0005737">
    <property type="term" value="C:cytoplasm"/>
    <property type="evidence" value="ECO:0007669"/>
    <property type="project" value="UniProtKB-SubCell"/>
</dbReference>
<dbReference type="GO" id="GO:0004017">
    <property type="term" value="F:adenylate kinase activity"/>
    <property type="evidence" value="ECO:0007669"/>
    <property type="project" value="UniProtKB-UniRule"/>
</dbReference>
<dbReference type="GO" id="GO:0005524">
    <property type="term" value="F:ATP binding"/>
    <property type="evidence" value="ECO:0007669"/>
    <property type="project" value="UniProtKB-UniRule"/>
</dbReference>
<dbReference type="GO" id="GO:0046872">
    <property type="term" value="F:metal ion binding"/>
    <property type="evidence" value="ECO:0007669"/>
    <property type="project" value="UniProtKB-KW"/>
</dbReference>
<dbReference type="GO" id="GO:0044209">
    <property type="term" value="P:AMP salvage"/>
    <property type="evidence" value="ECO:0007669"/>
    <property type="project" value="UniProtKB-UniRule"/>
</dbReference>
<dbReference type="CDD" id="cd01428">
    <property type="entry name" value="ADK"/>
    <property type="match status" value="1"/>
</dbReference>
<dbReference type="FunFam" id="3.40.50.300:FF:000106">
    <property type="entry name" value="Adenylate kinase mitochondrial"/>
    <property type="match status" value="1"/>
</dbReference>
<dbReference type="Gene3D" id="3.40.50.300">
    <property type="entry name" value="P-loop containing nucleotide triphosphate hydrolases"/>
    <property type="match status" value="1"/>
</dbReference>
<dbReference type="HAMAP" id="MF_00235">
    <property type="entry name" value="Adenylate_kinase_Adk"/>
    <property type="match status" value="1"/>
</dbReference>
<dbReference type="InterPro" id="IPR006259">
    <property type="entry name" value="Adenyl_kin_sub"/>
</dbReference>
<dbReference type="InterPro" id="IPR000850">
    <property type="entry name" value="Adenylat/UMP-CMP_kin"/>
</dbReference>
<dbReference type="InterPro" id="IPR033690">
    <property type="entry name" value="Adenylat_kinase_CS"/>
</dbReference>
<dbReference type="InterPro" id="IPR027417">
    <property type="entry name" value="P-loop_NTPase"/>
</dbReference>
<dbReference type="NCBIfam" id="TIGR01351">
    <property type="entry name" value="adk"/>
    <property type="match status" value="1"/>
</dbReference>
<dbReference type="NCBIfam" id="NF001380">
    <property type="entry name" value="PRK00279.1-2"/>
    <property type="match status" value="1"/>
</dbReference>
<dbReference type="NCBIfam" id="NF001381">
    <property type="entry name" value="PRK00279.1-3"/>
    <property type="match status" value="1"/>
</dbReference>
<dbReference type="NCBIfam" id="NF011100">
    <property type="entry name" value="PRK14527.1"/>
    <property type="match status" value="1"/>
</dbReference>
<dbReference type="PANTHER" id="PTHR23359">
    <property type="entry name" value="NUCLEOTIDE KINASE"/>
    <property type="match status" value="1"/>
</dbReference>
<dbReference type="Pfam" id="PF00406">
    <property type="entry name" value="ADK"/>
    <property type="match status" value="1"/>
</dbReference>
<dbReference type="PRINTS" id="PR00094">
    <property type="entry name" value="ADENYLTKNASE"/>
</dbReference>
<dbReference type="SUPFAM" id="SSF52540">
    <property type="entry name" value="P-loop containing nucleoside triphosphate hydrolases"/>
    <property type="match status" value="1"/>
</dbReference>
<dbReference type="PROSITE" id="PS00113">
    <property type="entry name" value="ADENYLATE_KINASE"/>
    <property type="match status" value="1"/>
</dbReference>
<sequence>MYNVIFLGAPGSGKGTQGEVVAKELRLAHMATGDLFRKAIERGDELGDTVKSYMERGELVPDEITISVVLKHLAGLKDVSGIILDGFPRSLRQAEALDEALVKQGEGIGRVIYINVPEDELVRRLSGRWVCRSCQSPYQCGCAEVAEGKCSRCQGELYQRPDDTPETVKERLKVYFSKTAPLIEYYRSKGKLSEIDGMAEITEVTKRIVSAIKCGK</sequence>
<proteinExistence type="inferred from homology"/>
<gene>
    <name evidence="1" type="primary">adk</name>
    <name type="ordered locus">DET0495</name>
</gene>
<name>KAD_DEHM1</name>
<accession>Q3Z960</accession>
<reference key="1">
    <citation type="journal article" date="2005" name="Science">
        <title>Genome sequence of the PCE-dechlorinating bacterium Dehalococcoides ethenogenes.</title>
        <authorList>
            <person name="Seshadri R."/>
            <person name="Adrian L."/>
            <person name="Fouts D.E."/>
            <person name="Eisen J.A."/>
            <person name="Phillippy A.M."/>
            <person name="Methe B.A."/>
            <person name="Ward N.L."/>
            <person name="Nelson W.C."/>
            <person name="DeBoy R.T."/>
            <person name="Khouri H.M."/>
            <person name="Kolonay J.F."/>
            <person name="Dodson R.J."/>
            <person name="Daugherty S.C."/>
            <person name="Brinkac L.M."/>
            <person name="Sullivan S.A."/>
            <person name="Madupu R."/>
            <person name="Nelson K.E."/>
            <person name="Kang K.H."/>
            <person name="Impraim M."/>
            <person name="Tran K."/>
            <person name="Robinson J.M."/>
            <person name="Forberger H.A."/>
            <person name="Fraser C.M."/>
            <person name="Zinder S.H."/>
            <person name="Heidelberg J.F."/>
        </authorList>
    </citation>
    <scope>NUCLEOTIDE SEQUENCE [LARGE SCALE GENOMIC DNA]</scope>
    <source>
        <strain>ATCC BAA-2266 / KCTC 15142 / 195</strain>
    </source>
</reference>
<organism>
    <name type="scientific">Dehalococcoides mccartyi (strain ATCC BAA-2266 / KCTC 15142 / 195)</name>
    <name type="common">Dehalococcoides ethenogenes (strain 195)</name>
    <dbReference type="NCBI Taxonomy" id="243164"/>
    <lineage>
        <taxon>Bacteria</taxon>
        <taxon>Bacillati</taxon>
        <taxon>Chloroflexota</taxon>
        <taxon>Dehalococcoidia</taxon>
        <taxon>Dehalococcoidales</taxon>
        <taxon>Dehalococcoidaceae</taxon>
        <taxon>Dehalococcoides</taxon>
    </lineage>
</organism>
<feature type="chain" id="PRO_1000071797" description="Adenylate kinase">
    <location>
        <begin position="1"/>
        <end position="216"/>
    </location>
</feature>
<feature type="region of interest" description="NMP" evidence="1">
    <location>
        <begin position="31"/>
        <end position="60"/>
    </location>
</feature>
<feature type="region of interest" description="LID" evidence="1">
    <location>
        <begin position="127"/>
        <end position="163"/>
    </location>
</feature>
<feature type="binding site" evidence="1">
    <location>
        <begin position="11"/>
        <end position="16"/>
    </location>
    <ligand>
        <name>ATP</name>
        <dbReference type="ChEBI" id="CHEBI:30616"/>
    </ligand>
</feature>
<feature type="binding site" evidence="1">
    <location>
        <position position="32"/>
    </location>
    <ligand>
        <name>AMP</name>
        <dbReference type="ChEBI" id="CHEBI:456215"/>
    </ligand>
</feature>
<feature type="binding site" evidence="1">
    <location>
        <position position="37"/>
    </location>
    <ligand>
        <name>AMP</name>
        <dbReference type="ChEBI" id="CHEBI:456215"/>
    </ligand>
</feature>
<feature type="binding site" evidence="1">
    <location>
        <begin position="58"/>
        <end position="60"/>
    </location>
    <ligand>
        <name>AMP</name>
        <dbReference type="ChEBI" id="CHEBI:456215"/>
    </ligand>
</feature>
<feature type="binding site" evidence="1">
    <location>
        <begin position="86"/>
        <end position="89"/>
    </location>
    <ligand>
        <name>AMP</name>
        <dbReference type="ChEBI" id="CHEBI:456215"/>
    </ligand>
</feature>
<feature type="binding site" evidence="1">
    <location>
        <position position="93"/>
    </location>
    <ligand>
        <name>AMP</name>
        <dbReference type="ChEBI" id="CHEBI:456215"/>
    </ligand>
</feature>
<feature type="binding site" evidence="1">
    <location>
        <position position="128"/>
    </location>
    <ligand>
        <name>ATP</name>
        <dbReference type="ChEBI" id="CHEBI:30616"/>
    </ligand>
</feature>
<feature type="binding site" evidence="1">
    <location>
        <position position="131"/>
    </location>
    <ligand>
        <name>Zn(2+)</name>
        <dbReference type="ChEBI" id="CHEBI:29105"/>
        <note>structural</note>
    </ligand>
</feature>
<feature type="binding site" evidence="1">
    <location>
        <position position="134"/>
    </location>
    <ligand>
        <name>Zn(2+)</name>
        <dbReference type="ChEBI" id="CHEBI:29105"/>
        <note>structural</note>
    </ligand>
</feature>
<feature type="binding site" evidence="1">
    <location>
        <position position="150"/>
    </location>
    <ligand>
        <name>Zn(2+)</name>
        <dbReference type="ChEBI" id="CHEBI:29105"/>
        <note>structural</note>
    </ligand>
</feature>
<feature type="binding site" evidence="1">
    <location>
        <position position="153"/>
    </location>
    <ligand>
        <name>Zn(2+)</name>
        <dbReference type="ChEBI" id="CHEBI:29105"/>
        <note>structural</note>
    </ligand>
</feature>
<feature type="binding site" evidence="1">
    <location>
        <position position="160"/>
    </location>
    <ligand>
        <name>AMP</name>
        <dbReference type="ChEBI" id="CHEBI:456215"/>
    </ligand>
</feature>
<feature type="binding site" evidence="1">
    <location>
        <position position="171"/>
    </location>
    <ligand>
        <name>AMP</name>
        <dbReference type="ChEBI" id="CHEBI:456215"/>
    </ligand>
</feature>
<feature type="binding site" evidence="1">
    <location>
        <position position="199"/>
    </location>
    <ligand>
        <name>ATP</name>
        <dbReference type="ChEBI" id="CHEBI:30616"/>
    </ligand>
</feature>
<comment type="function">
    <text evidence="1">Catalyzes the reversible transfer of the terminal phosphate group between ATP and AMP. Plays an important role in cellular energy homeostasis and in adenine nucleotide metabolism.</text>
</comment>
<comment type="catalytic activity">
    <reaction evidence="1">
        <text>AMP + ATP = 2 ADP</text>
        <dbReference type="Rhea" id="RHEA:12973"/>
        <dbReference type="ChEBI" id="CHEBI:30616"/>
        <dbReference type="ChEBI" id="CHEBI:456215"/>
        <dbReference type="ChEBI" id="CHEBI:456216"/>
        <dbReference type="EC" id="2.7.4.3"/>
    </reaction>
</comment>
<comment type="pathway">
    <text evidence="1">Purine metabolism; AMP biosynthesis via salvage pathway; AMP from ADP: step 1/1.</text>
</comment>
<comment type="subunit">
    <text evidence="1">Monomer.</text>
</comment>
<comment type="subcellular location">
    <subcellularLocation>
        <location evidence="1">Cytoplasm</location>
    </subcellularLocation>
</comment>
<comment type="domain">
    <text evidence="1">Consists of three domains, a large central CORE domain and two small peripheral domains, NMPbind and LID, which undergo movements during catalysis. The LID domain closes over the site of phosphoryl transfer upon ATP binding. Assembling and dissambling the active center during each catalytic cycle provides an effective means to prevent ATP hydrolysis. Some bacteria have evolved a zinc-coordinating structure that stabilizes the LID domain.</text>
</comment>
<comment type="similarity">
    <text evidence="1">Belongs to the adenylate kinase family.</text>
</comment>